<keyword id="KW-0877">Alternative promoter usage</keyword>
<keyword id="KW-1283">Bacterial microcompartment</keyword>
<keyword id="KW-0903">Direct protein sequencing</keyword>
<keyword id="KW-1185">Reference proteome</keyword>
<comment type="function">
    <text evidence="5 7 10">The two proteins produced are among the major shell proteins of the bacterial microcompartment (BMC) dedicated to 1,2-propanediol (1,2-PD) degradation (PubMed:12923081, PubMed:21239588). Required for structural integrity of BMCs and to mitigate propionaldehyde toxicity (PubMed:21239588). The N-terminal 13 residues are important for correct assembly of the BMC shell (PubMed:28138097). The isolated BMC shell component protein ratio for J:A:B':B:K:T:U is approximately 15:10:7:6:1:1:2 (PubMed:12923081). The N-terminus of the long form (PduB) is required for correct formation of BMCs, deletions in the first 37 residues have substantially reduced levels of the major lumen enzymes. May play a major role in binding the enzyme contents to the shell (PubMed:28138097).</text>
</comment>
<comment type="function">
    <text evidence="18">The 1,2-PD-specific bacterial microcompartment (BMC) concentrates low levels of 1,2-PD catabolic enzymes, concentrates volatile reaction intermediates thus enhancing pathway flux and keeps the level of toxic, mutagenic propionaldehyde low.</text>
</comment>
<comment type="pathway">
    <text evidence="15">Polyol metabolism; 1,2-propanediol degradation.</text>
</comment>
<comment type="subunit">
    <text evidence="1">Homotrimerizes to form a pseudohexamer with a central pore. The trimers pack into an array.</text>
</comment>
<comment type="subcellular location">
    <subcellularLocation>
        <location evidence="5 9">Bacterial microcompartment</location>
    </subcellularLocation>
</comment>
<comment type="alternative products">
    <event type="alternative promoter"/>
    <isoform>
        <id>P37449-1</id>
        <name>PduB</name>
        <sequence type="displayed"/>
    </isoform>
    <isoform>
        <id>P37449-2</id>
        <name>PduB'</name>
        <sequence type="described" ref="VSP_061270"/>
    </isoform>
    <text evidence="10 16">A Shine-Dalgarno sequence and an appropriate start codon precede each protein product (Probable). Mutation of Met-38 prevents translation of PduB' in vivo (PubMed:28138097).</text>
</comment>
<comment type="induction">
    <text evidence="3">BMC production is induced by growth on 1,2-PD vitamin B12 medium.</text>
</comment>
<comment type="domain">
    <text evidence="17">A probable alpha helix (residues 6-18) probably binds to cargo enzymes, attaching them to the shell.</text>
</comment>
<comment type="domain">
    <text evidence="14">Has 2 BMC domains which can evolve independently of each other.</text>
</comment>
<comment type="PTM">
    <text evidence="5 9">In purified BMCs seen as a 28.0 kDa and 25.0 kDa form, both of which have been N-terminally sequenced and whose N-fMet is removed; the smaller form is called PduB'.</text>
</comment>
<comment type="disruption phenotype">
    <text evidence="4 6 7">Releases increased amounts of acetaldehyde when grown on propanediol (PubMed:16585748). Cells do not make BMCs, diol dehydratase is found in diffuse aggregates near the cell pole; it was later found this a double pduA-pduBB' deletion (PubMed:11844753). A deletion that prevents synthesis of both proteins makes no BMCs, about 20% of cells form amorphous polar bodies. Grows in an interrupted manner on 1,2-PD and vitamin B12; grows for a while then stops, then restarts as if a toxic compound was accumulating and then decreases (PubMed:21239588).</text>
</comment>
<comment type="biotechnology">
    <text evidence="8">Artificial BMCs can be made in E.coli by expressing pduA-pduB/B'-pduT-pduU-pduN-pduJ-pduK (in this order). Enzymes can be targeted to the BMC, and appear to be encapsulated within it.</text>
</comment>
<comment type="biotechnology">
    <text evidence="11">Upon overexpression of PduB or PduB' and mixing of the resulting purified sheets with 2-ethyl-1-hexanol, will form closed shells. Enzymes (tested with endogenous BMC enzyme DDH and the peroxidase activity of cytC) can be encapsulated in the shells; the enzyme is active in the shells. The shells are permeable to a variety of compounds, showing they could be used to make protein based synthetic bioreactors.</text>
</comment>
<comment type="miscellaneous">
    <text evidence="3 5">Bacterial microcompartments (BMC) 100-200 nm in cross section are formed during aerobic growth on minimal 1,2-PD-B12 or anaerobic growth on 1,2-PD-tetrathionate medium, but not during aerobic growth on glucose, anerobic growth on glucose or pyruvate-tetrathionate (PubMed:10498708). BMCs can constitute up to 10% of total cell protein (PubMed:12923081).</text>
</comment>
<comment type="similarity">
    <text evidence="2">Belongs to the EutL/PduB family.</text>
</comment>
<comment type="sequence caution" evidence="14">
    <conflict type="frameshift">
        <sequence resource="EMBL-CDS" id="AAB84106"/>
    </conflict>
</comment>
<comment type="sequence caution" evidence="14">
    <conflict type="erroneous initiation">
        <sequence resource="EMBL-CDS" id="AAL20943"/>
    </conflict>
    <text>Truncated N-terminus.</text>
</comment>
<organism>
    <name type="scientific">Salmonella typhimurium (strain LT2 / SGSC1412 / ATCC 700720)</name>
    <dbReference type="NCBI Taxonomy" id="99287"/>
    <lineage>
        <taxon>Bacteria</taxon>
        <taxon>Pseudomonadati</taxon>
        <taxon>Pseudomonadota</taxon>
        <taxon>Gammaproteobacteria</taxon>
        <taxon>Enterobacterales</taxon>
        <taxon>Enterobacteriaceae</taxon>
        <taxon>Salmonella</taxon>
    </lineage>
</organism>
<sequence length="270" mass="28016">MSSNELVEQIMAQVIARVATPEQQAIPGQPQPIRETAMAEKSCSLTEFVGTAIGDTLGLVIANVDTALLDAMKLEKRYRSIGILGARTGAGPHIMAADEAVKATNTEVVSIELPRDTKGGAGHGSLIILGGNDVSDVKRGIEVALKELDRTFGDVYGNEAGHIELQYTARASYALEKAFGAPIGRACGIIVGAPASVGVLMADTALKSANVEVVAYSSPAHGTSFSNEAILVISGDSGAVRQAVTSAREIGKTVLATLGSEPKNDRPSYI</sequence>
<gene>
    <name evidence="13" type="primary">pduB</name>
    <name type="ordered locus">STM2039</name>
</gene>
<reference key="1">
    <citation type="journal article" date="1994" name="J. Bacteriol.">
        <title>The control region of the pdu/cob regulon in Salmonella typhimurium.</title>
        <authorList>
            <person name="Chen P."/>
            <person name="Anderson D.I."/>
            <person name="Roth J.R."/>
        </authorList>
    </citation>
    <scope>NUCLEOTIDE SEQUENCE [GENOMIC DNA]</scope>
    <source>
        <strain>LT2</strain>
    </source>
</reference>
<reference key="2">
    <citation type="journal article" date="1997" name="J. Bacteriol.">
        <title>Propanediol utilization genes (pdu) of Salmonella typhimurium: three genes for the propanediol dehydratase.</title>
        <authorList>
            <person name="Bobik T.A."/>
            <person name="Xu Y."/>
            <person name="Jeter R.M."/>
            <person name="Otto K.E."/>
            <person name="Roth J.R."/>
        </authorList>
    </citation>
    <scope>NUCLEOTIDE SEQUENCE [GENOMIC DNA]</scope>
    <source>
        <strain>LT2</strain>
    </source>
</reference>
<reference key="3">
    <citation type="journal article" date="1999" name="J. Bacteriol.">
        <title>The propanediol utilization (pdu) operon of Salmonella enterica serovar typhimurium LT2 includes genes necessary for formation of polyhedral organelles involved in coenzyme B(12)-dependent 1, 2-propanediol degradation.</title>
        <authorList>
            <person name="Bobik T.A."/>
            <person name="Havemann G.D."/>
            <person name="Busch R.J."/>
            <person name="Williams D.S."/>
            <person name="Aldrich H.C."/>
        </authorList>
    </citation>
    <scope>NUCLEOTIDE SEQUENCE [GENOMIC DNA]</scope>
    <scope>PATHWAY</scope>
    <scope>INDUCTION</scope>
    <scope>DISRUPTION PHENOTYPE</scope>
    <source>
        <strain>LT2</strain>
    </source>
</reference>
<reference key="4">
    <citation type="journal article" date="2001" name="Nature">
        <title>Complete genome sequence of Salmonella enterica serovar Typhimurium LT2.</title>
        <authorList>
            <person name="McClelland M."/>
            <person name="Sanderson K.E."/>
            <person name="Spieth J."/>
            <person name="Clifton S.W."/>
            <person name="Latreille P."/>
            <person name="Courtney L."/>
            <person name="Porwollik S."/>
            <person name="Ali J."/>
            <person name="Dante M."/>
            <person name="Du F."/>
            <person name="Hou S."/>
            <person name="Layman D."/>
            <person name="Leonard S."/>
            <person name="Nguyen C."/>
            <person name="Scott K."/>
            <person name="Holmes A."/>
            <person name="Grewal N."/>
            <person name="Mulvaney E."/>
            <person name="Ryan E."/>
            <person name="Sun H."/>
            <person name="Florea L."/>
            <person name="Miller W."/>
            <person name="Stoneking T."/>
            <person name="Nhan M."/>
            <person name="Waterston R."/>
            <person name="Wilson R.K."/>
        </authorList>
    </citation>
    <scope>NUCLEOTIDE SEQUENCE [LARGE SCALE GENOMIC DNA]</scope>
    <source>
        <strain>LT2 / SGSC1412 / ATCC 700720</strain>
    </source>
</reference>
<reference key="5">
    <citation type="journal article" date="2003" name="J. Bacteriol.">
        <title>Protein content of polyhedral organelles involved in coenzyme B12-dependent degradation of 1,2-propanediol in Salmonella enterica serovar Typhimurium LT2.</title>
        <authorList>
            <person name="Havemann G.D."/>
            <person name="Bobik T.A."/>
        </authorList>
    </citation>
    <scope>PROTEIN SEQUENCE OF 2-8 AND 39-45</scope>
    <scope>FUNCTION</scope>
    <scope>PDUB AND PDUB' ISOFORMS</scope>
    <scope>SUBCELLULAR LOCATION</scope>
    <source>
        <strain>LT2</strain>
    </source>
</reference>
<reference key="6">
    <citation type="journal article" date="2002" name="J. Bacteriol.">
        <title>PduA is a shell protein of polyhedral organelles involved in coenzyme B(12)-dependent degradation of 1,2-propanediol in Salmonella enterica serovar typhimurium LT2.</title>
        <authorList>
            <person name="Havemann G.D."/>
            <person name="Sampson E.M."/>
            <person name="Bobik T.A."/>
        </authorList>
    </citation>
    <scope>DISRUPTION PHENOTYPE</scope>
    <source>
        <strain>LT2</strain>
    </source>
</reference>
<reference key="7">
    <citation type="journal article" date="2006" name="J. Bacteriol.">
        <title>Conserving a volatile metabolite: a role for carboxysome-like organelles in Salmonella enterica.</title>
        <authorList>
            <person name="Penrod J.T."/>
            <person name="Roth J.R."/>
        </authorList>
    </citation>
    <scope>FUNCTION</scope>
    <scope>DISRUPTION PHENOTYPE</scope>
    <source>
        <strain>LT2</strain>
    </source>
</reference>
<reference key="8">
    <citation type="journal article" date="2011" name="J. Bacteriol.">
        <title>Genetic analysis of the protein shell of the microcompartments involved in coenzyme B12-dependent 1,2-propanediol degradation by Salmonella.</title>
        <authorList>
            <person name="Cheng S."/>
            <person name="Sinha S."/>
            <person name="Fan C."/>
            <person name="Liu Y."/>
            <person name="Bobik T.A."/>
        </authorList>
    </citation>
    <scope>FUNCTION</scope>
    <scope>DISRUPTION PHENOTYPE</scope>
    <source>
        <strain>LT2</strain>
    </source>
</reference>
<reference key="9">
    <citation type="journal article" date="2013" name="Microbiology">
        <title>A synthetic system for expression of components of a bacterial microcompartment.</title>
        <authorList>
            <person name="Sargent F."/>
            <person name="Davidson F.A."/>
            <person name="Kelly C.L."/>
            <person name="Binny R."/>
            <person name="Christodoulides N."/>
            <person name="Gibson D."/>
            <person name="Johansson E."/>
            <person name="Kozyrska K."/>
            <person name="Lado L.L."/>
            <person name="MacCallum J."/>
            <person name="Montague R."/>
            <person name="Ortmann B."/>
            <person name="Owen R."/>
            <person name="Coulthurst S.J."/>
            <person name="Dupuy L."/>
            <person name="Prescott A.R."/>
            <person name="Palmer T."/>
        </authorList>
    </citation>
    <scope>BIOTECHNOLOGY (ARTIFICIAL BMCS)</scope>
    <source>
        <strain>LT2</strain>
    </source>
</reference>
<reference key="10">
    <citation type="journal article" date="2016" name="Sci. Rep.">
        <title>Engineering formation of multiple recombinant Eut protein nanocompartments in E. coli.</title>
        <authorList>
            <person name="Held M."/>
            <person name="Kolb A."/>
            <person name="Perdue S."/>
            <person name="Hsu S.Y."/>
            <person name="Bloch S.E."/>
            <person name="Quin M.B."/>
            <person name="Schmidt-Dannert C."/>
        </authorList>
    </citation>
    <scope>SUBCELLULAR LOCATION</scope>
    <scope>2 ISOFORMS</scope>
    <source>
        <strain>LT2</strain>
    </source>
</reference>
<reference key="11">
    <citation type="journal article" date="2017" name="J. Bacteriol.">
        <title>The N Terminus of the PduB Protein Binds the Protein Shell of the Pdu Microcompartment to Its Enzymatic Core.</title>
        <authorList>
            <person name="Lehman B.P."/>
            <person name="Chowdhury C."/>
            <person name="Bobik T.A."/>
        </authorList>
    </citation>
    <scope>FUNCTION</scope>
    <scope>DOMAIN</scope>
    <scope>MUTAGENESIS OF 1-MET--ALA-37; 6-LEU--ALA-12; VAL-7; ILE-10; 11-MET--ALA-25; MET-11; VAL-14; 27-PRO--PRO-32 AND MET-38</scope>
    <source>
        <strain>LT2</strain>
    </source>
</reference>
<reference key="12">
    <citation type="journal article" date="2017" name="PLoS Comput. Biol.">
        <title>A systems-level model reveals that 1,2-Propanediol utilization microcompartments enhance pathway flux through intermediate sequestration.</title>
        <authorList>
            <person name="Jakobson C.M."/>
            <person name="Tullman-Ercek D."/>
            <person name="Slininger M.F."/>
            <person name="Mangan N.M."/>
        </authorList>
    </citation>
    <scope>SYSTEM-MODELING</scope>
    <scope>FUNCTION</scope>
    <source>
        <strain>LT2</strain>
    </source>
</reference>
<reference key="13">
    <citation type="journal article" date="2020" name="J. Mater. Chem. B">
        <title>Functional protein shells fabricated from the self-assembling protein sheets of prokaryotic organelles.</title>
        <authorList>
            <person name="Bari N.K."/>
            <person name="Kumar G."/>
            <person name="Hazra J.P."/>
            <person name="Kaur S."/>
            <person name="Sinha S."/>
        </authorList>
    </citation>
    <scope>BIOTECHNOLOGY (FORMING PROTEIN SHELLS)</scope>
    <source>
        <strain>LT2</strain>
    </source>
</reference>
<name>PDUB_SALTY</name>
<protein>
    <recommendedName>
        <fullName evidence="12">Bacterial microcompartment shell protein PduB</fullName>
    </recommendedName>
    <alternativeName>
        <fullName evidence="14">Bacterial microcompartment protein homotrimer</fullName>
        <shortName evidence="14">BMC-T</shortName>
    </alternativeName>
    <alternativeName>
        <fullName>Propanediol utilization protein PduB</fullName>
    </alternativeName>
</protein>
<dbReference type="EMBL" id="AF026270">
    <property type="protein sequence ID" value="AAB84106.1"/>
    <property type="status" value="ALT_FRAME"/>
    <property type="molecule type" value="Genomic_DNA"/>
</dbReference>
<dbReference type="EMBL" id="AE006468">
    <property type="protein sequence ID" value="AAL20943.1"/>
    <property type="status" value="ALT_INIT"/>
    <property type="molecule type" value="Genomic_DNA"/>
</dbReference>
<dbReference type="RefSeq" id="NP_460984.3">
    <molecule id="P37449-2"/>
    <property type="nucleotide sequence ID" value="NC_003197.2"/>
</dbReference>
<dbReference type="RefSeq" id="WP_012539884.1">
    <molecule id="P37449-2"/>
    <property type="nucleotide sequence ID" value="NC_003197.2"/>
</dbReference>
<dbReference type="SMR" id="P37449"/>
<dbReference type="STRING" id="99287.STM2039"/>
<dbReference type="PaxDb" id="99287-STM2039"/>
<dbReference type="DNASU" id="1253560"/>
<dbReference type="KEGG" id="stm:STM2039"/>
<dbReference type="HOGENOM" id="CLU_076302_0_0_6"/>
<dbReference type="OMA" id="SYACNKA"/>
<dbReference type="PhylomeDB" id="P37449"/>
<dbReference type="BioCyc" id="SENT99287:STM2039-MONOMER"/>
<dbReference type="UniPathway" id="UPA00621"/>
<dbReference type="CD-CODE" id="92BB331A">
    <property type="entry name" value="Enzyme_shell proteins condensates"/>
</dbReference>
<dbReference type="Proteomes" id="UP000001014">
    <property type="component" value="Chromosome"/>
</dbReference>
<dbReference type="GO" id="GO:0031472">
    <property type="term" value="C:propanediol degradation polyhedral organelle"/>
    <property type="evidence" value="ECO:0000314"/>
    <property type="project" value="UniProtKB"/>
</dbReference>
<dbReference type="GO" id="GO:0005198">
    <property type="term" value="F:structural molecule activity"/>
    <property type="evidence" value="ECO:0007669"/>
    <property type="project" value="InterPro"/>
</dbReference>
<dbReference type="GO" id="GO:0051144">
    <property type="term" value="P:propanediol catabolic process"/>
    <property type="evidence" value="ECO:0007669"/>
    <property type="project" value="UniProtKB-UniPathway"/>
</dbReference>
<dbReference type="CDD" id="cd07047">
    <property type="entry name" value="BMC_PduB_repeat1"/>
    <property type="match status" value="1"/>
</dbReference>
<dbReference type="CDD" id="cd07048">
    <property type="entry name" value="BMC_PduB_repeat2"/>
    <property type="match status" value="1"/>
</dbReference>
<dbReference type="Gene3D" id="3.30.70.1710">
    <property type="match status" value="2"/>
</dbReference>
<dbReference type="InterPro" id="IPR044870">
    <property type="entry name" value="BMC_CP"/>
</dbReference>
<dbReference type="InterPro" id="IPR000249">
    <property type="entry name" value="BMC_dom"/>
</dbReference>
<dbReference type="InterPro" id="IPR037233">
    <property type="entry name" value="CcmK-like_sf"/>
</dbReference>
<dbReference type="InterPro" id="IPR009193">
    <property type="entry name" value="EutL_PduB"/>
</dbReference>
<dbReference type="InterPro" id="IPR030984">
    <property type="entry name" value="PduB"/>
</dbReference>
<dbReference type="NCBIfam" id="TIGR04501">
    <property type="entry name" value="microcomp_PduB"/>
    <property type="match status" value="1"/>
</dbReference>
<dbReference type="NCBIfam" id="NF011944">
    <property type="entry name" value="PRK15415.1"/>
    <property type="match status" value="1"/>
</dbReference>
<dbReference type="Pfam" id="PF00936">
    <property type="entry name" value="BMC"/>
    <property type="match status" value="2"/>
</dbReference>
<dbReference type="PIRSF" id="PIRSF012290">
    <property type="entry name" value="EutL_PduB"/>
    <property type="match status" value="1"/>
</dbReference>
<dbReference type="SMART" id="SM00877">
    <property type="entry name" value="BMC"/>
    <property type="match status" value="2"/>
</dbReference>
<dbReference type="SUPFAM" id="SSF143414">
    <property type="entry name" value="CcmK-like"/>
    <property type="match status" value="2"/>
</dbReference>
<dbReference type="PROSITE" id="PS51931">
    <property type="entry name" value="BMC_CP"/>
    <property type="match status" value="2"/>
</dbReference>
<evidence type="ECO:0000250" key="1">
    <source>
        <dbReference type="UniProtKB" id="A5VMB3"/>
    </source>
</evidence>
<evidence type="ECO:0000255" key="2">
    <source>
        <dbReference type="PROSITE-ProRule" id="PRU01279"/>
    </source>
</evidence>
<evidence type="ECO:0000269" key="3">
    <source>
    </source>
</evidence>
<evidence type="ECO:0000269" key="4">
    <source>
    </source>
</evidence>
<evidence type="ECO:0000269" key="5">
    <source>
    </source>
</evidence>
<evidence type="ECO:0000269" key="6">
    <source>
    </source>
</evidence>
<evidence type="ECO:0000269" key="7">
    <source>
    </source>
</evidence>
<evidence type="ECO:0000269" key="8">
    <source>
    </source>
</evidence>
<evidence type="ECO:0000269" key="9">
    <source>
    </source>
</evidence>
<evidence type="ECO:0000269" key="10">
    <source>
    </source>
</evidence>
<evidence type="ECO:0000269" key="11">
    <source>
    </source>
</evidence>
<evidence type="ECO:0000303" key="12">
    <source>
    </source>
</evidence>
<evidence type="ECO:0000303" key="13">
    <source>
    </source>
</evidence>
<evidence type="ECO:0000305" key="14"/>
<evidence type="ECO:0000305" key="15">
    <source>
    </source>
</evidence>
<evidence type="ECO:0000305" key="16">
    <source>
    </source>
</evidence>
<evidence type="ECO:0000305" key="17">
    <source>
    </source>
</evidence>
<evidence type="ECO:0000305" key="18">
    <source>
    </source>
</evidence>
<accession>P37449</accession>
<proteinExistence type="evidence at protein level"/>
<feature type="initiator methionine" description="Removed" evidence="5">
    <location>
        <position position="1"/>
    </location>
</feature>
<feature type="chain" id="PRO_0000201519" description="Bacterial microcompartment shell protein PduB">
    <location>
        <begin position="2"/>
        <end position="270"/>
    </location>
</feature>
<feature type="domain" description="BMC circularly permuted 1" evidence="2">
    <location>
        <begin position="47"/>
        <end position="152"/>
    </location>
</feature>
<feature type="domain" description="BMC circularly permuted 2" evidence="2">
    <location>
        <begin position="154"/>
        <end position="258"/>
    </location>
</feature>
<feature type="region of interest" description="Probable helix that binds cargo to the BMC shell" evidence="17">
    <location>
        <begin position="6"/>
        <end position="18"/>
    </location>
</feature>
<feature type="splice variant" id="VSP_061270" description="In isoform PduB'." evidence="5">
    <location>
        <begin position="1"/>
        <end position="37"/>
    </location>
</feature>
<feature type="mutagenesis site" description="Makes large empty BMCs, makes about 11% BMCs." evidence="10">
    <location>
        <begin position="1"/>
        <end position="37"/>
    </location>
</feature>
<feature type="mutagenesis site" description="Makes large empty BMCs, makes about 30% BMCs." evidence="10">
    <location>
        <begin position="6"/>
        <end position="12"/>
    </location>
</feature>
<feature type="mutagenesis site" description="Makes about 80% BMCs, 78% diol dehydratase content." evidence="10">
    <original>V</original>
    <variation>T</variation>
    <location>
        <position position="7"/>
    </location>
</feature>
<feature type="mutagenesis site" description="Makes about 25% BMCs, 35% diol dehydratase content." evidence="10">
    <original>I</original>
    <variation>T</variation>
    <location>
        <position position="10"/>
    </location>
</feature>
<feature type="mutagenesis site" description="BMCs have a severe assembly defect, makes about 27% BMCs." evidence="10">
    <location>
        <begin position="11"/>
        <end position="25"/>
    </location>
</feature>
<feature type="mutagenesis site" description="Makes about 90% BMCs, 87% diol dehydratase content." evidence="10">
    <original>M</original>
    <variation>S</variation>
    <location>
        <position position="11"/>
    </location>
</feature>
<feature type="mutagenesis site" description="Makes about 70% BMCs, 74% diol dehydratase content." evidence="10">
    <original>V</original>
    <variation>T</variation>
    <location>
        <position position="14"/>
    </location>
</feature>
<feature type="mutagenesis site" description="Makes about 75% BMCs." evidence="10">
    <location>
        <begin position="27"/>
        <end position="32"/>
    </location>
</feature>
<feature type="mutagenesis site" description="Does not make PduB', makes about 66% BMCs, with wild-type appearance." evidence="10">
    <original>M</original>
    <variation>A</variation>
    <location>
        <position position="38"/>
    </location>
</feature>
<feature type="sequence conflict" description="In Ref. 3; AAB84106." evidence="14" ref="3">
    <original>G</original>
    <variation>A</variation>
    <location>
        <position position="85"/>
    </location>
</feature>
<feature type="initiator methionine" description="Removed" evidence="5">
    <location sequence="P37449-2">
        <position position="1"/>
    </location>
</feature>